<protein>
    <recommendedName>
        <fullName evidence="1">Orotidine 5'-phosphate decarboxylase</fullName>
        <ecNumber evidence="1">4.1.1.23</ecNumber>
    </recommendedName>
    <alternativeName>
        <fullName evidence="1">OMP decarboxylase</fullName>
        <shortName evidence="1">OMPDCase</shortName>
        <shortName evidence="1">OMPdecase</shortName>
    </alternativeName>
</protein>
<organism>
    <name type="scientific">Roseiflexus castenholzii (strain DSM 13941 / HLO8)</name>
    <dbReference type="NCBI Taxonomy" id="383372"/>
    <lineage>
        <taxon>Bacteria</taxon>
        <taxon>Bacillati</taxon>
        <taxon>Chloroflexota</taxon>
        <taxon>Chloroflexia</taxon>
        <taxon>Chloroflexales</taxon>
        <taxon>Roseiflexineae</taxon>
        <taxon>Roseiflexaceae</taxon>
        <taxon>Roseiflexus</taxon>
    </lineage>
</organism>
<comment type="catalytic activity">
    <reaction evidence="1">
        <text>orotidine 5'-phosphate + H(+) = UMP + CO2</text>
        <dbReference type="Rhea" id="RHEA:11596"/>
        <dbReference type="ChEBI" id="CHEBI:15378"/>
        <dbReference type="ChEBI" id="CHEBI:16526"/>
        <dbReference type="ChEBI" id="CHEBI:57538"/>
        <dbReference type="ChEBI" id="CHEBI:57865"/>
        <dbReference type="EC" id="4.1.1.23"/>
    </reaction>
</comment>
<comment type="pathway">
    <text evidence="1">Pyrimidine metabolism; UMP biosynthesis via de novo pathway; UMP from orotate: step 2/2.</text>
</comment>
<comment type="similarity">
    <text evidence="1">Belongs to the OMP decarboxylase family. Type 2 subfamily.</text>
</comment>
<proteinExistence type="inferred from homology"/>
<gene>
    <name evidence="1" type="primary">pyrF</name>
    <name type="ordered locus">Rcas_4349</name>
</gene>
<sequence length="272" mass="28846">MNFFESLDTAAWRNQSRLCVGLDPEPARMPDCLPKDAEGIYTFCAAIMDATVDLVCAYKPNVAFFEAHGAAGWSALERLVKRRPGPPLILDAKRGDIGSTAEAYARSVFTTLGADAVTLSPYLGSDALEPFLRHADRGCFILCKTSNPGSGDLQDARLADGRPLYLAVAEMARDCWNMRGNVGLVVGATHPAALADIRRACPDMLILAPGVGAQGGDLEATVRAAAAGDDPRLIVNVSRTVLYADRGANFAAAARTAARQLRDAINAALRAV</sequence>
<name>PYRF_ROSCS</name>
<keyword id="KW-0210">Decarboxylase</keyword>
<keyword id="KW-0456">Lyase</keyword>
<keyword id="KW-0665">Pyrimidine biosynthesis</keyword>
<keyword id="KW-1185">Reference proteome</keyword>
<dbReference type="EC" id="4.1.1.23" evidence="1"/>
<dbReference type="EMBL" id="CP000804">
    <property type="protein sequence ID" value="ABU60373.1"/>
    <property type="molecule type" value="Genomic_DNA"/>
</dbReference>
<dbReference type="RefSeq" id="WP_012122794.1">
    <property type="nucleotide sequence ID" value="NC_009767.1"/>
</dbReference>
<dbReference type="SMR" id="A7NS27"/>
<dbReference type="STRING" id="383372.Rcas_4349"/>
<dbReference type="KEGG" id="rca:Rcas_4349"/>
<dbReference type="eggNOG" id="COG0284">
    <property type="taxonomic scope" value="Bacteria"/>
</dbReference>
<dbReference type="HOGENOM" id="CLU_060704_1_0_0"/>
<dbReference type="OrthoDB" id="9808470at2"/>
<dbReference type="UniPathway" id="UPA00070">
    <property type="reaction ID" value="UER00120"/>
</dbReference>
<dbReference type="Proteomes" id="UP000000263">
    <property type="component" value="Chromosome"/>
</dbReference>
<dbReference type="GO" id="GO:0004590">
    <property type="term" value="F:orotidine-5'-phosphate decarboxylase activity"/>
    <property type="evidence" value="ECO:0007669"/>
    <property type="project" value="UniProtKB-UniRule"/>
</dbReference>
<dbReference type="GO" id="GO:0006207">
    <property type="term" value="P:'de novo' pyrimidine nucleobase biosynthetic process"/>
    <property type="evidence" value="ECO:0007669"/>
    <property type="project" value="InterPro"/>
</dbReference>
<dbReference type="GO" id="GO:0044205">
    <property type="term" value="P:'de novo' UMP biosynthetic process"/>
    <property type="evidence" value="ECO:0007669"/>
    <property type="project" value="UniProtKB-UniRule"/>
</dbReference>
<dbReference type="CDD" id="cd04725">
    <property type="entry name" value="OMP_decarboxylase_like"/>
    <property type="match status" value="1"/>
</dbReference>
<dbReference type="Gene3D" id="3.20.20.70">
    <property type="entry name" value="Aldolase class I"/>
    <property type="match status" value="1"/>
</dbReference>
<dbReference type="HAMAP" id="MF_01215">
    <property type="entry name" value="OMPdecase_type2"/>
    <property type="match status" value="1"/>
</dbReference>
<dbReference type="InterPro" id="IPR013785">
    <property type="entry name" value="Aldolase_TIM"/>
</dbReference>
<dbReference type="InterPro" id="IPR018089">
    <property type="entry name" value="OMPdecase_AS"/>
</dbReference>
<dbReference type="InterPro" id="IPR011995">
    <property type="entry name" value="OMPdecase_type-2"/>
</dbReference>
<dbReference type="InterPro" id="IPR001754">
    <property type="entry name" value="OMPdeCOase_dom"/>
</dbReference>
<dbReference type="InterPro" id="IPR011060">
    <property type="entry name" value="RibuloseP-bd_barrel"/>
</dbReference>
<dbReference type="NCBIfam" id="TIGR02127">
    <property type="entry name" value="pyrF_sub2"/>
    <property type="match status" value="1"/>
</dbReference>
<dbReference type="PANTHER" id="PTHR43375">
    <property type="entry name" value="OROTIDINE 5'-PHOSPHATE DECARBOXYLASE"/>
    <property type="match status" value="1"/>
</dbReference>
<dbReference type="PANTHER" id="PTHR43375:SF1">
    <property type="entry name" value="OROTIDINE 5'-PHOSPHATE DECARBOXYLASE"/>
    <property type="match status" value="1"/>
</dbReference>
<dbReference type="Pfam" id="PF00215">
    <property type="entry name" value="OMPdecase"/>
    <property type="match status" value="1"/>
</dbReference>
<dbReference type="SMART" id="SM00934">
    <property type="entry name" value="OMPdecase"/>
    <property type="match status" value="1"/>
</dbReference>
<dbReference type="SUPFAM" id="SSF51366">
    <property type="entry name" value="Ribulose-phoshate binding barrel"/>
    <property type="match status" value="1"/>
</dbReference>
<dbReference type="PROSITE" id="PS00156">
    <property type="entry name" value="OMPDECASE"/>
    <property type="match status" value="1"/>
</dbReference>
<accession>A7NS27</accession>
<feature type="chain" id="PRO_1000085576" description="Orotidine 5'-phosphate decarboxylase">
    <location>
        <begin position="1"/>
        <end position="272"/>
    </location>
</feature>
<feature type="active site" description="Proton donor" evidence="1">
    <location>
        <position position="93"/>
    </location>
</feature>
<evidence type="ECO:0000255" key="1">
    <source>
        <dbReference type="HAMAP-Rule" id="MF_01215"/>
    </source>
</evidence>
<reference key="1">
    <citation type="submission" date="2007-08" db="EMBL/GenBank/DDBJ databases">
        <title>Complete sequence of Roseiflexus castenholzii DSM 13941.</title>
        <authorList>
            <consortium name="US DOE Joint Genome Institute"/>
            <person name="Copeland A."/>
            <person name="Lucas S."/>
            <person name="Lapidus A."/>
            <person name="Barry K."/>
            <person name="Glavina del Rio T."/>
            <person name="Dalin E."/>
            <person name="Tice H."/>
            <person name="Pitluck S."/>
            <person name="Thompson L.S."/>
            <person name="Brettin T."/>
            <person name="Bruce D."/>
            <person name="Detter J.C."/>
            <person name="Han C."/>
            <person name="Tapia R."/>
            <person name="Schmutz J."/>
            <person name="Larimer F."/>
            <person name="Land M."/>
            <person name="Hauser L."/>
            <person name="Kyrpides N."/>
            <person name="Mikhailova N."/>
            <person name="Bryant D.A."/>
            <person name="Hanada S."/>
            <person name="Tsukatani Y."/>
            <person name="Richardson P."/>
        </authorList>
    </citation>
    <scope>NUCLEOTIDE SEQUENCE [LARGE SCALE GENOMIC DNA]</scope>
    <source>
        <strain>DSM 13941 / HLO8</strain>
    </source>
</reference>